<sequence>TYVIAEPCVDVKDKACIEECPVDCIYEGARMLYIHPDECVDCGACEPVCPVEAIYYEDDVPDQWSSYAQANADFFAELGSPGGASKVGQTDNDPQAIKDLPPQGED</sequence>
<dbReference type="PIR" id="A00219">
    <property type="entry name" value="FEMYFS"/>
</dbReference>
<dbReference type="PDB" id="2V2K">
    <property type="method" value="X-ray"/>
    <property type="resolution" value="1.60 A"/>
    <property type="chains" value="A/B=1-105"/>
</dbReference>
<dbReference type="PDBsum" id="2V2K"/>
<dbReference type="SMR" id="P00215"/>
<dbReference type="eggNOG" id="COG1146">
    <property type="taxonomic scope" value="Bacteria"/>
</dbReference>
<dbReference type="OMA" id="VAEPCIN"/>
<dbReference type="EvolutionaryTrace" id="P00215"/>
<dbReference type="GO" id="GO:0051538">
    <property type="term" value="F:3 iron, 4 sulfur cluster binding"/>
    <property type="evidence" value="ECO:0007669"/>
    <property type="project" value="UniProtKB-KW"/>
</dbReference>
<dbReference type="GO" id="GO:0051539">
    <property type="term" value="F:4 iron, 4 sulfur cluster binding"/>
    <property type="evidence" value="ECO:0007669"/>
    <property type="project" value="UniProtKB-KW"/>
</dbReference>
<dbReference type="GO" id="GO:0009055">
    <property type="term" value="F:electron transfer activity"/>
    <property type="evidence" value="ECO:0007669"/>
    <property type="project" value="InterPro"/>
</dbReference>
<dbReference type="GO" id="GO:0046872">
    <property type="term" value="F:metal ion binding"/>
    <property type="evidence" value="ECO:0007669"/>
    <property type="project" value="UniProtKB-KW"/>
</dbReference>
<dbReference type="Gene3D" id="3.30.70.20">
    <property type="match status" value="1"/>
</dbReference>
<dbReference type="InterPro" id="IPR017896">
    <property type="entry name" value="4Fe4S_Fe-S-bd"/>
</dbReference>
<dbReference type="InterPro" id="IPR017900">
    <property type="entry name" value="4Fe4S_Fe_S_CS"/>
</dbReference>
<dbReference type="InterPro" id="IPR000813">
    <property type="entry name" value="7Fe_ferredoxin"/>
</dbReference>
<dbReference type="InterPro" id="IPR054830">
    <property type="entry name" value="FdxA_Actino"/>
</dbReference>
<dbReference type="InterPro" id="IPR050294">
    <property type="entry name" value="RnfB_subfamily"/>
</dbReference>
<dbReference type="NCBIfam" id="NF045480">
    <property type="entry name" value="FdxA_Actino"/>
    <property type="match status" value="1"/>
</dbReference>
<dbReference type="PANTHER" id="PTHR42859:SF2">
    <property type="entry name" value="FERREDOXIN"/>
    <property type="match status" value="1"/>
</dbReference>
<dbReference type="PANTHER" id="PTHR42859">
    <property type="entry name" value="OXIDOREDUCTASE"/>
    <property type="match status" value="1"/>
</dbReference>
<dbReference type="Pfam" id="PF00037">
    <property type="entry name" value="Fer4"/>
    <property type="match status" value="1"/>
</dbReference>
<dbReference type="PRINTS" id="PR00354">
    <property type="entry name" value="7FE8SFRDOXIN"/>
</dbReference>
<dbReference type="SUPFAM" id="SSF54862">
    <property type="entry name" value="4Fe-4S ferredoxins"/>
    <property type="match status" value="1"/>
</dbReference>
<dbReference type="PROSITE" id="PS00198">
    <property type="entry name" value="4FE4S_FER_1"/>
    <property type="match status" value="1"/>
</dbReference>
<dbReference type="PROSITE" id="PS51379">
    <property type="entry name" value="4FE4S_FER_2"/>
    <property type="match status" value="1"/>
</dbReference>
<feature type="chain" id="PRO_0000159101" description="Ferredoxin">
    <location>
        <begin position="1"/>
        <end position="106"/>
    </location>
</feature>
<feature type="domain" description="4Fe-4S ferredoxin-type" evidence="2">
    <location>
        <begin position="30"/>
        <end position="59"/>
    </location>
</feature>
<feature type="region of interest" description="Disordered" evidence="3">
    <location>
        <begin position="81"/>
        <end position="106"/>
    </location>
</feature>
<feature type="binding site" evidence="1">
    <location>
        <position position="8"/>
    </location>
    <ligand>
        <name>[3Fe-4S] cluster</name>
        <dbReference type="ChEBI" id="CHEBI:21137"/>
    </ligand>
</feature>
<feature type="binding site" evidence="1">
    <location>
        <position position="16"/>
    </location>
    <ligand>
        <name>[3Fe-4S] cluster</name>
        <dbReference type="ChEBI" id="CHEBI:21137"/>
    </ligand>
</feature>
<feature type="binding site" evidence="1">
    <location>
        <position position="20"/>
    </location>
    <ligand>
        <name>[4Fe-4S] cluster</name>
        <dbReference type="ChEBI" id="CHEBI:49883"/>
    </ligand>
</feature>
<feature type="binding site" evidence="1">
    <location>
        <position position="39"/>
    </location>
    <ligand>
        <name>[4Fe-4S] cluster</name>
        <dbReference type="ChEBI" id="CHEBI:49883"/>
    </ligand>
</feature>
<feature type="binding site" evidence="1">
    <location>
        <position position="42"/>
    </location>
    <ligand>
        <name>[4Fe-4S] cluster</name>
        <dbReference type="ChEBI" id="CHEBI:49883"/>
    </ligand>
</feature>
<feature type="binding site" evidence="1">
    <location>
        <position position="45"/>
    </location>
    <ligand>
        <name>[4Fe-4S] cluster</name>
        <dbReference type="ChEBI" id="CHEBI:49883"/>
    </ligand>
</feature>
<feature type="binding site" evidence="1">
    <location>
        <position position="49"/>
    </location>
    <ligand>
        <name>[3Fe-4S] cluster</name>
        <dbReference type="ChEBI" id="CHEBI:21137"/>
    </ligand>
</feature>
<feature type="strand" evidence="4">
    <location>
        <begin position="2"/>
        <end position="4"/>
    </location>
</feature>
<feature type="helix" evidence="4">
    <location>
        <begin position="6"/>
        <end position="8"/>
    </location>
</feature>
<feature type="turn" evidence="4">
    <location>
        <begin position="9"/>
        <end position="11"/>
    </location>
</feature>
<feature type="helix" evidence="4">
    <location>
        <begin position="15"/>
        <end position="19"/>
    </location>
</feature>
<feature type="strand" evidence="4">
    <location>
        <begin position="25"/>
        <end position="27"/>
    </location>
</feature>
<feature type="strand" evidence="4">
    <location>
        <begin position="32"/>
        <end position="34"/>
    </location>
</feature>
<feature type="turn" evidence="4">
    <location>
        <begin position="36"/>
        <end position="38"/>
    </location>
</feature>
<feature type="helix" evidence="4">
    <location>
        <begin position="46"/>
        <end position="48"/>
    </location>
</feature>
<feature type="strand" evidence="4">
    <location>
        <begin position="54"/>
        <end position="56"/>
    </location>
</feature>
<feature type="helix" evidence="4">
    <location>
        <begin position="57"/>
        <end position="59"/>
    </location>
</feature>
<feature type="helix" evidence="4">
    <location>
        <begin position="62"/>
        <end position="66"/>
    </location>
</feature>
<feature type="helix" evidence="4">
    <location>
        <begin position="67"/>
        <end position="73"/>
    </location>
</feature>
<feature type="turn" evidence="4">
    <location>
        <begin position="74"/>
        <end position="78"/>
    </location>
</feature>
<feature type="helix" evidence="4">
    <location>
        <begin position="84"/>
        <end position="87"/>
    </location>
</feature>
<feature type="helix" evidence="4">
    <location>
        <begin position="95"/>
        <end position="98"/>
    </location>
</feature>
<protein>
    <recommendedName>
        <fullName>Ferredoxin</fullName>
    </recommendedName>
</protein>
<organism>
    <name type="scientific">Mycolicibacterium smegmatis</name>
    <name type="common">Mycobacterium smegmatis</name>
    <dbReference type="NCBI Taxonomy" id="1772"/>
    <lineage>
        <taxon>Bacteria</taxon>
        <taxon>Bacillati</taxon>
        <taxon>Actinomycetota</taxon>
        <taxon>Actinomycetes</taxon>
        <taxon>Mycobacteriales</taxon>
        <taxon>Mycobacteriaceae</taxon>
        <taxon>Mycolicibacterium</taxon>
    </lineage>
</organism>
<proteinExistence type="evidence at protein level"/>
<evidence type="ECO:0000250" key="1"/>
<evidence type="ECO:0000255" key="2">
    <source>
        <dbReference type="PROSITE-ProRule" id="PRU00711"/>
    </source>
</evidence>
<evidence type="ECO:0000256" key="3">
    <source>
        <dbReference type="SAM" id="MobiDB-lite"/>
    </source>
</evidence>
<evidence type="ECO:0007829" key="4">
    <source>
        <dbReference type="PDB" id="2V2K"/>
    </source>
</evidence>
<reference key="1">
    <citation type="journal article" date="1979" name="FEBS Lett.">
        <title>Mycobacterium smegmatis ferredoxin: a unique distribution of cysteine residues constructing iron-sulfur clusters.</title>
        <authorList>
            <person name="Hase T."/>
            <person name="Wakabayashi S."/>
            <person name="Matsubara H."/>
            <person name="Imai T."/>
            <person name="Matsumoto T."/>
            <person name="Tobari J."/>
        </authorList>
    </citation>
    <scope>PROTEIN SEQUENCE</scope>
</reference>
<gene>
    <name type="primary">fdxA</name>
</gene>
<accession>P00215</accession>
<name>FER_MYCSM</name>
<keyword id="KW-0002">3D-structure</keyword>
<keyword id="KW-0003">3Fe-4S</keyword>
<keyword id="KW-0004">4Fe-4S</keyword>
<keyword id="KW-0903">Direct protein sequencing</keyword>
<keyword id="KW-0249">Electron transport</keyword>
<keyword id="KW-0408">Iron</keyword>
<keyword id="KW-0411">Iron-sulfur</keyword>
<keyword id="KW-0479">Metal-binding</keyword>
<keyword id="KW-0677">Repeat</keyword>
<keyword id="KW-0813">Transport</keyword>
<comment type="function">
    <text>Ferredoxins are iron-sulfur proteins that transfer electrons in a wide variety of metabolic reactions.</text>
</comment>
<comment type="cofactor">
    <cofactor>
        <name>[4Fe-4S] cluster</name>
        <dbReference type="ChEBI" id="CHEBI:49883"/>
    </cofactor>
    <text>Binds 1 [4Fe-4S] cluster.</text>
</comment>
<comment type="cofactor">
    <cofactor>
        <name>[3Fe-4S] cluster</name>
        <dbReference type="ChEBI" id="CHEBI:21137"/>
    </cofactor>
    <text>Binds 1 [3Fe-4S] cluster.</text>
</comment>